<protein>
    <recommendedName>
        <fullName evidence="1">Large ribosomal subunit protein uL22</fullName>
    </recommendedName>
    <alternativeName>
        <fullName evidence="2">50S ribosomal protein L22</fullName>
    </alternativeName>
</protein>
<keyword id="KW-0687">Ribonucleoprotein</keyword>
<keyword id="KW-0689">Ribosomal protein</keyword>
<keyword id="KW-0694">RNA-binding</keyword>
<keyword id="KW-0699">rRNA-binding</keyword>
<proteinExistence type="inferred from homology"/>
<sequence>MAEITSAKAMARTVRVSPRKTRLVLDLIRGKKVADAIAILKFTPNKAARVIEKTLNSAIANAENNFGLEKANLVVSETFANEGPTMKRFRPRAKGSASPINKRTTHVTVVVSEK</sequence>
<dbReference type="EMBL" id="AM295007">
    <property type="protein sequence ID" value="CAM29391.1"/>
    <property type="molecule type" value="Genomic_DNA"/>
</dbReference>
<dbReference type="RefSeq" id="WP_002986651.1">
    <property type="nucleotide sequence ID" value="NC_009332.1"/>
</dbReference>
<dbReference type="SMR" id="A2RC19"/>
<dbReference type="GeneID" id="83703909"/>
<dbReference type="KEGG" id="spf:SpyM50049"/>
<dbReference type="HOGENOM" id="CLU_083987_3_3_9"/>
<dbReference type="GO" id="GO:0022625">
    <property type="term" value="C:cytosolic large ribosomal subunit"/>
    <property type="evidence" value="ECO:0007669"/>
    <property type="project" value="TreeGrafter"/>
</dbReference>
<dbReference type="GO" id="GO:0019843">
    <property type="term" value="F:rRNA binding"/>
    <property type="evidence" value="ECO:0007669"/>
    <property type="project" value="UniProtKB-UniRule"/>
</dbReference>
<dbReference type="GO" id="GO:0003735">
    <property type="term" value="F:structural constituent of ribosome"/>
    <property type="evidence" value="ECO:0007669"/>
    <property type="project" value="InterPro"/>
</dbReference>
<dbReference type="GO" id="GO:0006412">
    <property type="term" value="P:translation"/>
    <property type="evidence" value="ECO:0007669"/>
    <property type="project" value="UniProtKB-UniRule"/>
</dbReference>
<dbReference type="CDD" id="cd00336">
    <property type="entry name" value="Ribosomal_L22"/>
    <property type="match status" value="1"/>
</dbReference>
<dbReference type="FunFam" id="3.90.470.10:FF:000001">
    <property type="entry name" value="50S ribosomal protein L22"/>
    <property type="match status" value="1"/>
</dbReference>
<dbReference type="Gene3D" id="3.90.470.10">
    <property type="entry name" value="Ribosomal protein L22/L17"/>
    <property type="match status" value="1"/>
</dbReference>
<dbReference type="HAMAP" id="MF_01331_B">
    <property type="entry name" value="Ribosomal_uL22_B"/>
    <property type="match status" value="1"/>
</dbReference>
<dbReference type="InterPro" id="IPR001063">
    <property type="entry name" value="Ribosomal_uL22"/>
</dbReference>
<dbReference type="InterPro" id="IPR005727">
    <property type="entry name" value="Ribosomal_uL22_bac/chlpt-type"/>
</dbReference>
<dbReference type="InterPro" id="IPR047867">
    <property type="entry name" value="Ribosomal_uL22_bac/org-type"/>
</dbReference>
<dbReference type="InterPro" id="IPR018260">
    <property type="entry name" value="Ribosomal_uL22_CS"/>
</dbReference>
<dbReference type="InterPro" id="IPR036394">
    <property type="entry name" value="Ribosomal_uL22_sf"/>
</dbReference>
<dbReference type="NCBIfam" id="TIGR01044">
    <property type="entry name" value="rplV_bact"/>
    <property type="match status" value="1"/>
</dbReference>
<dbReference type="PANTHER" id="PTHR13501">
    <property type="entry name" value="CHLOROPLAST 50S RIBOSOMAL PROTEIN L22-RELATED"/>
    <property type="match status" value="1"/>
</dbReference>
<dbReference type="PANTHER" id="PTHR13501:SF8">
    <property type="entry name" value="LARGE RIBOSOMAL SUBUNIT PROTEIN UL22M"/>
    <property type="match status" value="1"/>
</dbReference>
<dbReference type="Pfam" id="PF00237">
    <property type="entry name" value="Ribosomal_L22"/>
    <property type="match status" value="1"/>
</dbReference>
<dbReference type="SUPFAM" id="SSF54843">
    <property type="entry name" value="Ribosomal protein L22"/>
    <property type="match status" value="1"/>
</dbReference>
<dbReference type="PROSITE" id="PS00464">
    <property type="entry name" value="RIBOSOMAL_L22"/>
    <property type="match status" value="1"/>
</dbReference>
<feature type="chain" id="PRO_1000052665" description="Large ribosomal subunit protein uL22">
    <location>
        <begin position="1"/>
        <end position="114"/>
    </location>
</feature>
<name>RL22_STRPG</name>
<organism>
    <name type="scientific">Streptococcus pyogenes serotype M5 (strain Manfredo)</name>
    <dbReference type="NCBI Taxonomy" id="160491"/>
    <lineage>
        <taxon>Bacteria</taxon>
        <taxon>Bacillati</taxon>
        <taxon>Bacillota</taxon>
        <taxon>Bacilli</taxon>
        <taxon>Lactobacillales</taxon>
        <taxon>Streptococcaceae</taxon>
        <taxon>Streptococcus</taxon>
    </lineage>
</organism>
<comment type="function">
    <text evidence="1">This protein binds specifically to 23S rRNA; its binding is stimulated by other ribosomal proteins, e.g. L4, L17, and L20. It is important during the early stages of 50S assembly. It makes multiple contacts with different domains of the 23S rRNA in the assembled 50S subunit and ribosome (By similarity).</text>
</comment>
<comment type="function">
    <text evidence="1">The globular domain of the protein is located near the polypeptide exit tunnel on the outside of the subunit, while an extended beta-hairpin is found that lines the wall of the exit tunnel in the center of the 70S ribosome.</text>
</comment>
<comment type="subunit">
    <text evidence="1">Part of the 50S ribosomal subunit.</text>
</comment>
<comment type="similarity">
    <text evidence="1">Belongs to the universal ribosomal protein uL22 family.</text>
</comment>
<accession>A2RC19</accession>
<gene>
    <name evidence="1" type="primary">rplV</name>
    <name type="ordered locus">SpyM50049</name>
</gene>
<evidence type="ECO:0000255" key="1">
    <source>
        <dbReference type="HAMAP-Rule" id="MF_01331"/>
    </source>
</evidence>
<evidence type="ECO:0000305" key="2"/>
<reference key="1">
    <citation type="journal article" date="2007" name="J. Bacteriol.">
        <title>Complete genome of acute rheumatic fever-associated serotype M5 Streptococcus pyogenes strain Manfredo.</title>
        <authorList>
            <person name="Holden M.T.G."/>
            <person name="Scott A."/>
            <person name="Cherevach I."/>
            <person name="Chillingworth T."/>
            <person name="Churcher C."/>
            <person name="Cronin A."/>
            <person name="Dowd L."/>
            <person name="Feltwell T."/>
            <person name="Hamlin N."/>
            <person name="Holroyd S."/>
            <person name="Jagels K."/>
            <person name="Moule S."/>
            <person name="Mungall K."/>
            <person name="Quail M.A."/>
            <person name="Price C."/>
            <person name="Rabbinowitsch E."/>
            <person name="Sharp S."/>
            <person name="Skelton J."/>
            <person name="Whitehead S."/>
            <person name="Barrell B.G."/>
            <person name="Kehoe M."/>
            <person name="Parkhill J."/>
        </authorList>
    </citation>
    <scope>NUCLEOTIDE SEQUENCE [LARGE SCALE GENOMIC DNA]</scope>
    <source>
        <strain>Manfredo</strain>
    </source>
</reference>